<comment type="function">
    <text evidence="1">Negative regulator of class I heat shock genes (grpE-dnaK-dnaJ and groELS operons). Prevents heat-shock induction of these operons.</text>
</comment>
<comment type="similarity">
    <text evidence="1">Belongs to the HrcA family.</text>
</comment>
<sequence>MIDDRKLQILRAIIQDYISTGEPVGSRTIAKKYNLGVSSATIRNEMADLEDMGFLEQPHTSAGRIPSSRGYRLYVDRMIEFERLSSEEEGLIRSSIIDGTLYEVDKIIKQTSALLSELTKMTCIVKAPSVHKSFVKSIQLLKVDDVSILCVLVTDNGVIRNTVIKVKSVPISEELIKISKIITERLKNLTIEQINLEVISNLNRALSGYEDIVNAVLPALYESLKGDETSEVFLEGTINIFNYPEYNNIHKAKEILELLHDKKSISELISDSDDMTVKIGDEIFVPEAKECSIISAGYHVGDRSLGTIALIGPRRINYSKVLSIMTEVMKELNETLKNK</sequence>
<gene>
    <name evidence="1" type="primary">hrcA</name>
    <name type="ordered locus">CPF_2292</name>
</gene>
<reference key="1">
    <citation type="journal article" date="2006" name="Genome Res.">
        <title>Skewed genomic variability in strains of the toxigenic bacterial pathogen, Clostridium perfringens.</title>
        <authorList>
            <person name="Myers G.S.A."/>
            <person name="Rasko D.A."/>
            <person name="Cheung J.K."/>
            <person name="Ravel J."/>
            <person name="Seshadri R."/>
            <person name="DeBoy R.T."/>
            <person name="Ren Q."/>
            <person name="Varga J."/>
            <person name="Awad M.M."/>
            <person name="Brinkac L.M."/>
            <person name="Daugherty S.C."/>
            <person name="Haft D.H."/>
            <person name="Dodson R.J."/>
            <person name="Madupu R."/>
            <person name="Nelson W.C."/>
            <person name="Rosovitz M.J."/>
            <person name="Sullivan S.A."/>
            <person name="Khouri H."/>
            <person name="Dimitrov G.I."/>
            <person name="Watkins K.L."/>
            <person name="Mulligan S."/>
            <person name="Benton J."/>
            <person name="Radune D."/>
            <person name="Fisher D.J."/>
            <person name="Atkins H.S."/>
            <person name="Hiscox T."/>
            <person name="Jost B.H."/>
            <person name="Billington S.J."/>
            <person name="Songer J.G."/>
            <person name="McClane B.A."/>
            <person name="Titball R.W."/>
            <person name="Rood J.I."/>
            <person name="Melville S.B."/>
            <person name="Paulsen I.T."/>
        </authorList>
    </citation>
    <scope>NUCLEOTIDE SEQUENCE [LARGE SCALE GENOMIC DNA]</scope>
    <source>
        <strain>ATCC 13124 / DSM 756 / JCM 1290 / NCIMB 6125 / NCTC 8237 / S 107 / Type A</strain>
    </source>
</reference>
<organism>
    <name type="scientific">Clostridium perfringens (strain ATCC 13124 / DSM 756 / JCM 1290 / NCIMB 6125 / NCTC 8237 / Type A)</name>
    <dbReference type="NCBI Taxonomy" id="195103"/>
    <lineage>
        <taxon>Bacteria</taxon>
        <taxon>Bacillati</taxon>
        <taxon>Bacillota</taxon>
        <taxon>Clostridia</taxon>
        <taxon>Eubacteriales</taxon>
        <taxon>Clostridiaceae</taxon>
        <taxon>Clostridium</taxon>
    </lineage>
</organism>
<feature type="chain" id="PRO_1000010399" description="Heat-inducible transcription repressor HrcA">
    <location>
        <begin position="1"/>
        <end position="339"/>
    </location>
</feature>
<accession>Q0TNS5</accession>
<evidence type="ECO:0000255" key="1">
    <source>
        <dbReference type="HAMAP-Rule" id="MF_00081"/>
    </source>
</evidence>
<dbReference type="EMBL" id="CP000246">
    <property type="protein sequence ID" value="ABG82619.1"/>
    <property type="molecule type" value="Genomic_DNA"/>
</dbReference>
<dbReference type="RefSeq" id="WP_003470958.1">
    <property type="nucleotide sequence ID" value="NC_008261.1"/>
</dbReference>
<dbReference type="SMR" id="Q0TNS5"/>
<dbReference type="STRING" id="195103.CPF_2292"/>
<dbReference type="PaxDb" id="195103-CPF_2292"/>
<dbReference type="GeneID" id="93001427"/>
<dbReference type="KEGG" id="cpf:CPF_2292"/>
<dbReference type="eggNOG" id="COG1420">
    <property type="taxonomic scope" value="Bacteria"/>
</dbReference>
<dbReference type="HOGENOM" id="CLU_050019_1_0_9"/>
<dbReference type="Proteomes" id="UP000001823">
    <property type="component" value="Chromosome"/>
</dbReference>
<dbReference type="GO" id="GO:0003677">
    <property type="term" value="F:DNA binding"/>
    <property type="evidence" value="ECO:0007669"/>
    <property type="project" value="InterPro"/>
</dbReference>
<dbReference type="GO" id="GO:0045892">
    <property type="term" value="P:negative regulation of DNA-templated transcription"/>
    <property type="evidence" value="ECO:0007669"/>
    <property type="project" value="UniProtKB-UniRule"/>
</dbReference>
<dbReference type="FunFam" id="1.10.10.10:FF:000049">
    <property type="entry name" value="Heat-inducible transcription repressor HrcA"/>
    <property type="match status" value="1"/>
</dbReference>
<dbReference type="Gene3D" id="3.30.450.40">
    <property type="match status" value="1"/>
</dbReference>
<dbReference type="Gene3D" id="3.30.390.60">
    <property type="entry name" value="Heat-inducible transcription repressor hrca homolog, domain 3"/>
    <property type="match status" value="1"/>
</dbReference>
<dbReference type="Gene3D" id="1.10.10.10">
    <property type="entry name" value="Winged helix-like DNA-binding domain superfamily/Winged helix DNA-binding domain"/>
    <property type="match status" value="1"/>
</dbReference>
<dbReference type="HAMAP" id="MF_00081">
    <property type="entry name" value="HrcA"/>
    <property type="match status" value="1"/>
</dbReference>
<dbReference type="InterPro" id="IPR029016">
    <property type="entry name" value="GAF-like_dom_sf"/>
</dbReference>
<dbReference type="InterPro" id="IPR002571">
    <property type="entry name" value="HrcA"/>
</dbReference>
<dbReference type="InterPro" id="IPR021153">
    <property type="entry name" value="HrcA_C"/>
</dbReference>
<dbReference type="InterPro" id="IPR036388">
    <property type="entry name" value="WH-like_DNA-bd_sf"/>
</dbReference>
<dbReference type="InterPro" id="IPR036390">
    <property type="entry name" value="WH_DNA-bd_sf"/>
</dbReference>
<dbReference type="InterPro" id="IPR023120">
    <property type="entry name" value="WHTH_transcript_rep_HrcA_IDD"/>
</dbReference>
<dbReference type="NCBIfam" id="TIGR00331">
    <property type="entry name" value="hrcA"/>
    <property type="match status" value="1"/>
</dbReference>
<dbReference type="PANTHER" id="PTHR34824">
    <property type="entry name" value="HEAT-INDUCIBLE TRANSCRIPTION REPRESSOR HRCA"/>
    <property type="match status" value="1"/>
</dbReference>
<dbReference type="PANTHER" id="PTHR34824:SF1">
    <property type="entry name" value="HEAT-INDUCIBLE TRANSCRIPTION REPRESSOR HRCA"/>
    <property type="match status" value="1"/>
</dbReference>
<dbReference type="Pfam" id="PF01628">
    <property type="entry name" value="HrcA"/>
    <property type="match status" value="1"/>
</dbReference>
<dbReference type="PIRSF" id="PIRSF005485">
    <property type="entry name" value="HrcA"/>
    <property type="match status" value="1"/>
</dbReference>
<dbReference type="SUPFAM" id="SSF55781">
    <property type="entry name" value="GAF domain-like"/>
    <property type="match status" value="1"/>
</dbReference>
<dbReference type="SUPFAM" id="SSF46785">
    <property type="entry name" value="Winged helix' DNA-binding domain"/>
    <property type="match status" value="1"/>
</dbReference>
<keyword id="KW-0678">Repressor</keyword>
<keyword id="KW-0346">Stress response</keyword>
<keyword id="KW-0804">Transcription</keyword>
<keyword id="KW-0805">Transcription regulation</keyword>
<name>HRCA_CLOP1</name>
<protein>
    <recommendedName>
        <fullName evidence="1">Heat-inducible transcription repressor HrcA</fullName>
    </recommendedName>
</protein>
<proteinExistence type="inferred from homology"/>